<protein>
    <recommendedName>
        <fullName evidence="1">NAD kinase</fullName>
        <ecNumber evidence="1">2.7.1.23</ecNumber>
    </recommendedName>
    <alternativeName>
        <fullName evidence="1">ATP-dependent NAD kinase</fullName>
    </alternativeName>
</protein>
<feature type="chain" id="PRO_0000229622" description="NAD kinase">
    <location>
        <begin position="1"/>
        <end position="280"/>
    </location>
</feature>
<feature type="active site" description="Proton acceptor" evidence="1">
    <location>
        <position position="60"/>
    </location>
</feature>
<feature type="binding site" evidence="1">
    <location>
        <begin position="60"/>
        <end position="61"/>
    </location>
    <ligand>
        <name>NAD(+)</name>
        <dbReference type="ChEBI" id="CHEBI:57540"/>
    </ligand>
</feature>
<feature type="binding site" evidence="1">
    <location>
        <begin position="134"/>
        <end position="135"/>
    </location>
    <ligand>
        <name>NAD(+)</name>
        <dbReference type="ChEBI" id="CHEBI:57540"/>
    </ligand>
</feature>
<feature type="binding site" evidence="1">
    <location>
        <position position="145"/>
    </location>
    <ligand>
        <name>NAD(+)</name>
        <dbReference type="ChEBI" id="CHEBI:57540"/>
    </ligand>
</feature>
<feature type="binding site" evidence="1">
    <location>
        <position position="164"/>
    </location>
    <ligand>
        <name>NAD(+)</name>
        <dbReference type="ChEBI" id="CHEBI:57540"/>
    </ligand>
</feature>
<feature type="binding site" evidence="1">
    <location>
        <begin position="175"/>
        <end position="180"/>
    </location>
    <ligand>
        <name>NAD(+)</name>
        <dbReference type="ChEBI" id="CHEBI:57540"/>
    </ligand>
</feature>
<feature type="binding site" evidence="1">
    <location>
        <position position="234"/>
    </location>
    <ligand>
        <name>NAD(+)</name>
        <dbReference type="ChEBI" id="CHEBI:57540"/>
    </ligand>
</feature>
<accession>Q3AAN2</accession>
<organism>
    <name type="scientific">Carboxydothermus hydrogenoformans (strain ATCC BAA-161 / DSM 6008 / Z-2901)</name>
    <dbReference type="NCBI Taxonomy" id="246194"/>
    <lineage>
        <taxon>Bacteria</taxon>
        <taxon>Bacillati</taxon>
        <taxon>Bacillota</taxon>
        <taxon>Clostridia</taxon>
        <taxon>Thermoanaerobacterales</taxon>
        <taxon>Thermoanaerobacteraceae</taxon>
        <taxon>Carboxydothermus</taxon>
    </lineage>
</organism>
<sequence>MNKDKKLGPILLEKIMEKARDYDFLLKNRYLVSGECGIVEIAEIDEKTEKIDLVLVLGGDGTILCATRYFAPKAIPILGINLGQLGYLSELDPQEIDFGLQKIRAGEYLVEDRTMLEARVRRANQEVAVFYGLNDGVLTKGAFARIINFAVFVDEQYITEYAADGVIVATPTGSTAYSLSAGGAILDPEVKAFIITPICPHTLAARSLVVADDKEIRIVVKTALESSMLTVDGQQGFGIKPGDEIIIKKAPYQAKFIKLKNRSFYQLLREKMREANRYHD</sequence>
<gene>
    <name evidence="1" type="primary">nadK</name>
    <name type="ordered locus">CHY_1983</name>
</gene>
<comment type="function">
    <text evidence="1">Involved in the regulation of the intracellular balance of NAD and NADP, and is a key enzyme in the biosynthesis of NADP. Catalyzes specifically the phosphorylation on 2'-hydroxyl of the adenosine moiety of NAD to yield NADP.</text>
</comment>
<comment type="catalytic activity">
    <reaction evidence="1">
        <text>NAD(+) + ATP = ADP + NADP(+) + H(+)</text>
        <dbReference type="Rhea" id="RHEA:18629"/>
        <dbReference type="ChEBI" id="CHEBI:15378"/>
        <dbReference type="ChEBI" id="CHEBI:30616"/>
        <dbReference type="ChEBI" id="CHEBI:57540"/>
        <dbReference type="ChEBI" id="CHEBI:58349"/>
        <dbReference type="ChEBI" id="CHEBI:456216"/>
        <dbReference type="EC" id="2.7.1.23"/>
    </reaction>
</comment>
<comment type="cofactor">
    <cofactor evidence="1">
        <name>a divalent metal cation</name>
        <dbReference type="ChEBI" id="CHEBI:60240"/>
    </cofactor>
</comment>
<comment type="subcellular location">
    <subcellularLocation>
        <location evidence="1">Cytoplasm</location>
    </subcellularLocation>
</comment>
<comment type="similarity">
    <text evidence="1">Belongs to the NAD kinase family.</text>
</comment>
<proteinExistence type="inferred from homology"/>
<evidence type="ECO:0000255" key="1">
    <source>
        <dbReference type="HAMAP-Rule" id="MF_00361"/>
    </source>
</evidence>
<reference key="1">
    <citation type="journal article" date="2005" name="PLoS Genet.">
        <title>Life in hot carbon monoxide: the complete genome sequence of Carboxydothermus hydrogenoformans Z-2901.</title>
        <authorList>
            <person name="Wu M."/>
            <person name="Ren Q."/>
            <person name="Durkin A.S."/>
            <person name="Daugherty S.C."/>
            <person name="Brinkac L.M."/>
            <person name="Dodson R.J."/>
            <person name="Madupu R."/>
            <person name="Sullivan S.A."/>
            <person name="Kolonay J.F."/>
            <person name="Nelson W.C."/>
            <person name="Tallon L.J."/>
            <person name="Jones K.M."/>
            <person name="Ulrich L.E."/>
            <person name="Gonzalez J.M."/>
            <person name="Zhulin I.B."/>
            <person name="Robb F.T."/>
            <person name="Eisen J.A."/>
        </authorList>
    </citation>
    <scope>NUCLEOTIDE SEQUENCE [LARGE SCALE GENOMIC DNA]</scope>
    <source>
        <strain>ATCC BAA-161 / DSM 6008 / Z-2901</strain>
    </source>
</reference>
<dbReference type="EC" id="2.7.1.23" evidence="1"/>
<dbReference type="EMBL" id="CP000141">
    <property type="protein sequence ID" value="ABB14078.1"/>
    <property type="molecule type" value="Genomic_DNA"/>
</dbReference>
<dbReference type="SMR" id="Q3AAN2"/>
<dbReference type="FunCoup" id="Q3AAN2">
    <property type="interactions" value="431"/>
</dbReference>
<dbReference type="STRING" id="246194.CHY_1983"/>
<dbReference type="KEGG" id="chy:CHY_1983"/>
<dbReference type="eggNOG" id="COG0061">
    <property type="taxonomic scope" value="Bacteria"/>
</dbReference>
<dbReference type="HOGENOM" id="CLU_008831_0_1_9"/>
<dbReference type="InParanoid" id="Q3AAN2"/>
<dbReference type="OrthoDB" id="9774737at2"/>
<dbReference type="Proteomes" id="UP000002706">
    <property type="component" value="Chromosome"/>
</dbReference>
<dbReference type="GO" id="GO:0005737">
    <property type="term" value="C:cytoplasm"/>
    <property type="evidence" value="ECO:0007669"/>
    <property type="project" value="UniProtKB-SubCell"/>
</dbReference>
<dbReference type="GO" id="GO:0005524">
    <property type="term" value="F:ATP binding"/>
    <property type="evidence" value="ECO:0007669"/>
    <property type="project" value="UniProtKB-KW"/>
</dbReference>
<dbReference type="GO" id="GO:0046872">
    <property type="term" value="F:metal ion binding"/>
    <property type="evidence" value="ECO:0007669"/>
    <property type="project" value="UniProtKB-UniRule"/>
</dbReference>
<dbReference type="GO" id="GO:0051287">
    <property type="term" value="F:NAD binding"/>
    <property type="evidence" value="ECO:0007669"/>
    <property type="project" value="UniProtKB-ARBA"/>
</dbReference>
<dbReference type="GO" id="GO:0003951">
    <property type="term" value="F:NAD+ kinase activity"/>
    <property type="evidence" value="ECO:0007669"/>
    <property type="project" value="UniProtKB-UniRule"/>
</dbReference>
<dbReference type="GO" id="GO:0019674">
    <property type="term" value="P:NAD metabolic process"/>
    <property type="evidence" value="ECO:0007669"/>
    <property type="project" value="InterPro"/>
</dbReference>
<dbReference type="GO" id="GO:0006741">
    <property type="term" value="P:NADP biosynthetic process"/>
    <property type="evidence" value="ECO:0007669"/>
    <property type="project" value="UniProtKB-UniRule"/>
</dbReference>
<dbReference type="Gene3D" id="3.40.50.10330">
    <property type="entry name" value="Probable inorganic polyphosphate/atp-NAD kinase, domain 1"/>
    <property type="match status" value="1"/>
</dbReference>
<dbReference type="Gene3D" id="2.60.200.30">
    <property type="entry name" value="Probable inorganic polyphosphate/atp-NAD kinase, domain 2"/>
    <property type="match status" value="1"/>
</dbReference>
<dbReference type="HAMAP" id="MF_00361">
    <property type="entry name" value="NAD_kinase"/>
    <property type="match status" value="1"/>
</dbReference>
<dbReference type="InterPro" id="IPR017438">
    <property type="entry name" value="ATP-NAD_kinase_N"/>
</dbReference>
<dbReference type="InterPro" id="IPR017437">
    <property type="entry name" value="ATP-NAD_kinase_PpnK-typ_C"/>
</dbReference>
<dbReference type="InterPro" id="IPR016064">
    <property type="entry name" value="NAD/diacylglycerol_kinase_sf"/>
</dbReference>
<dbReference type="InterPro" id="IPR002504">
    <property type="entry name" value="NADK"/>
</dbReference>
<dbReference type="PANTHER" id="PTHR20275">
    <property type="entry name" value="NAD KINASE"/>
    <property type="match status" value="1"/>
</dbReference>
<dbReference type="PANTHER" id="PTHR20275:SF0">
    <property type="entry name" value="NAD KINASE"/>
    <property type="match status" value="1"/>
</dbReference>
<dbReference type="Pfam" id="PF01513">
    <property type="entry name" value="NAD_kinase"/>
    <property type="match status" value="1"/>
</dbReference>
<dbReference type="Pfam" id="PF20143">
    <property type="entry name" value="NAD_kinase_C"/>
    <property type="match status" value="1"/>
</dbReference>
<dbReference type="SUPFAM" id="SSF111331">
    <property type="entry name" value="NAD kinase/diacylglycerol kinase-like"/>
    <property type="match status" value="1"/>
</dbReference>
<keyword id="KW-0067">ATP-binding</keyword>
<keyword id="KW-0963">Cytoplasm</keyword>
<keyword id="KW-0418">Kinase</keyword>
<keyword id="KW-0520">NAD</keyword>
<keyword id="KW-0521">NADP</keyword>
<keyword id="KW-0547">Nucleotide-binding</keyword>
<keyword id="KW-1185">Reference proteome</keyword>
<keyword id="KW-0808">Transferase</keyword>
<name>NADK_CARHZ</name>